<gene>
    <name evidence="1" type="primary">rpl13</name>
    <name type="ordered locus">MMP1324</name>
</gene>
<sequence length="137" mass="15195">MVVVNAENAVVGRLASYVAKLALSGEEITVVNAEKAIMTGNKEYIFQKYVQLRTRKSISNPKKMGPKYPRRPDDIVRRVIRGMLPYKKPRGVEAFKKIKIEVGVPEGVSIDINLGSAPNTIKYVTVGELSQFLGAKF</sequence>
<evidence type="ECO:0000255" key="1">
    <source>
        <dbReference type="HAMAP-Rule" id="MF_01366"/>
    </source>
</evidence>
<evidence type="ECO:0000305" key="2"/>
<protein>
    <recommendedName>
        <fullName evidence="1">Large ribosomal subunit protein uL13</fullName>
    </recommendedName>
    <alternativeName>
        <fullName evidence="2">50S ribosomal protein L13</fullName>
    </alternativeName>
</protein>
<comment type="function">
    <text evidence="1">This protein is one of the early assembly proteins of the 50S ribosomal subunit, although it is not seen to bind rRNA by itself. It is important during the early stages of 50S assembly.</text>
</comment>
<comment type="subunit">
    <text evidence="1">Part of the 50S ribosomal subunit.</text>
</comment>
<comment type="similarity">
    <text evidence="1">Belongs to the universal ribosomal protein uL13 family.</text>
</comment>
<feature type="chain" id="PRO_0000261838" description="Large ribosomal subunit protein uL13">
    <location>
        <begin position="1"/>
        <end position="137"/>
    </location>
</feature>
<proteinExistence type="inferred from homology"/>
<name>RL13_METMP</name>
<dbReference type="EMBL" id="BX950229">
    <property type="protein sequence ID" value="CAF30880.1"/>
    <property type="molecule type" value="Genomic_DNA"/>
</dbReference>
<dbReference type="RefSeq" id="WP_011171268.1">
    <property type="nucleotide sequence ID" value="NC_005791.1"/>
</dbReference>
<dbReference type="SMR" id="Q6LXM6"/>
<dbReference type="STRING" id="267377.MMP1324"/>
<dbReference type="EnsemblBacteria" id="CAF30880">
    <property type="protein sequence ID" value="CAF30880"/>
    <property type="gene ID" value="MMP1324"/>
</dbReference>
<dbReference type="KEGG" id="mmp:MMP1324"/>
<dbReference type="PATRIC" id="fig|267377.15.peg.1359"/>
<dbReference type="eggNOG" id="arCOG04242">
    <property type="taxonomic scope" value="Archaea"/>
</dbReference>
<dbReference type="HOGENOM" id="CLU_076922_1_0_2"/>
<dbReference type="OrthoDB" id="7668at2157"/>
<dbReference type="Proteomes" id="UP000000590">
    <property type="component" value="Chromosome"/>
</dbReference>
<dbReference type="GO" id="GO:0022625">
    <property type="term" value="C:cytosolic large ribosomal subunit"/>
    <property type="evidence" value="ECO:0007669"/>
    <property type="project" value="TreeGrafter"/>
</dbReference>
<dbReference type="GO" id="GO:0003729">
    <property type="term" value="F:mRNA binding"/>
    <property type="evidence" value="ECO:0007669"/>
    <property type="project" value="TreeGrafter"/>
</dbReference>
<dbReference type="GO" id="GO:0003735">
    <property type="term" value="F:structural constituent of ribosome"/>
    <property type="evidence" value="ECO:0007669"/>
    <property type="project" value="InterPro"/>
</dbReference>
<dbReference type="GO" id="GO:0017148">
    <property type="term" value="P:negative regulation of translation"/>
    <property type="evidence" value="ECO:0007669"/>
    <property type="project" value="TreeGrafter"/>
</dbReference>
<dbReference type="GO" id="GO:0006412">
    <property type="term" value="P:translation"/>
    <property type="evidence" value="ECO:0007669"/>
    <property type="project" value="UniProtKB-UniRule"/>
</dbReference>
<dbReference type="Gene3D" id="3.90.1180.10">
    <property type="entry name" value="Ribosomal protein L13"/>
    <property type="match status" value="1"/>
</dbReference>
<dbReference type="HAMAP" id="MF_01366">
    <property type="entry name" value="Ribosomal_uL13"/>
    <property type="match status" value="1"/>
</dbReference>
<dbReference type="InterPro" id="IPR005822">
    <property type="entry name" value="Ribosomal_uL13"/>
</dbReference>
<dbReference type="InterPro" id="IPR005823">
    <property type="entry name" value="Ribosomal_uL13_bac-type"/>
</dbReference>
<dbReference type="InterPro" id="IPR005755">
    <property type="entry name" value="Ribosomal_uL13_euk/arc"/>
</dbReference>
<dbReference type="InterPro" id="IPR036899">
    <property type="entry name" value="Ribosomal_uL13_sf"/>
</dbReference>
<dbReference type="NCBIfam" id="TIGR01077">
    <property type="entry name" value="L13_A_E"/>
    <property type="match status" value="1"/>
</dbReference>
<dbReference type="NCBIfam" id="NF005004">
    <property type="entry name" value="PRK06394.1"/>
    <property type="match status" value="1"/>
</dbReference>
<dbReference type="PANTHER" id="PTHR11545:SF3">
    <property type="entry name" value="LARGE RIBOSOMAL SUBUNIT PROTEIN UL13"/>
    <property type="match status" value="1"/>
</dbReference>
<dbReference type="PANTHER" id="PTHR11545">
    <property type="entry name" value="RIBOSOMAL PROTEIN L13"/>
    <property type="match status" value="1"/>
</dbReference>
<dbReference type="Pfam" id="PF00572">
    <property type="entry name" value="Ribosomal_L13"/>
    <property type="match status" value="1"/>
</dbReference>
<dbReference type="PIRSF" id="PIRSF002181">
    <property type="entry name" value="Ribosomal_L13"/>
    <property type="match status" value="1"/>
</dbReference>
<dbReference type="SUPFAM" id="SSF52161">
    <property type="entry name" value="Ribosomal protein L13"/>
    <property type="match status" value="1"/>
</dbReference>
<keyword id="KW-1185">Reference proteome</keyword>
<keyword id="KW-0687">Ribonucleoprotein</keyword>
<keyword id="KW-0689">Ribosomal protein</keyword>
<organism>
    <name type="scientific">Methanococcus maripaludis (strain DSM 14266 / JCM 13030 / NBRC 101832 / S2 / LL)</name>
    <dbReference type="NCBI Taxonomy" id="267377"/>
    <lineage>
        <taxon>Archaea</taxon>
        <taxon>Methanobacteriati</taxon>
        <taxon>Methanobacteriota</taxon>
        <taxon>Methanomada group</taxon>
        <taxon>Methanococci</taxon>
        <taxon>Methanococcales</taxon>
        <taxon>Methanococcaceae</taxon>
        <taxon>Methanococcus</taxon>
    </lineage>
</organism>
<accession>Q6LXM6</accession>
<reference key="1">
    <citation type="journal article" date="2004" name="J. Bacteriol.">
        <title>Complete genome sequence of the genetically tractable hydrogenotrophic methanogen Methanococcus maripaludis.</title>
        <authorList>
            <person name="Hendrickson E.L."/>
            <person name="Kaul R."/>
            <person name="Zhou Y."/>
            <person name="Bovee D."/>
            <person name="Chapman P."/>
            <person name="Chung J."/>
            <person name="Conway de Macario E."/>
            <person name="Dodsworth J.A."/>
            <person name="Gillett W."/>
            <person name="Graham D.E."/>
            <person name="Hackett M."/>
            <person name="Haydock A.K."/>
            <person name="Kang A."/>
            <person name="Land M.L."/>
            <person name="Levy R."/>
            <person name="Lie T.J."/>
            <person name="Major T.A."/>
            <person name="Moore B.C."/>
            <person name="Porat I."/>
            <person name="Palmeiri A."/>
            <person name="Rouse G."/>
            <person name="Saenphimmachak C."/>
            <person name="Soell D."/>
            <person name="Van Dien S."/>
            <person name="Wang T."/>
            <person name="Whitman W.B."/>
            <person name="Xia Q."/>
            <person name="Zhang Y."/>
            <person name="Larimer F.W."/>
            <person name="Olson M.V."/>
            <person name="Leigh J.A."/>
        </authorList>
    </citation>
    <scope>NUCLEOTIDE SEQUENCE [LARGE SCALE GENOMIC DNA]</scope>
    <source>
        <strain>DSM 14266 / JCM 13030 / NBRC 101832 / S2 / LL</strain>
    </source>
</reference>